<proteinExistence type="inferred from homology"/>
<organism>
    <name type="scientific">Delftia acidovorans (strain DSM 14801 / SPH-1)</name>
    <dbReference type="NCBI Taxonomy" id="398578"/>
    <lineage>
        <taxon>Bacteria</taxon>
        <taxon>Pseudomonadati</taxon>
        <taxon>Pseudomonadota</taxon>
        <taxon>Betaproteobacteria</taxon>
        <taxon>Burkholderiales</taxon>
        <taxon>Comamonadaceae</taxon>
        <taxon>Delftia</taxon>
    </lineage>
</organism>
<feature type="chain" id="PRO_1000140543" description="Small ribosomal subunit protein uS8">
    <location>
        <begin position="1"/>
        <end position="131"/>
    </location>
</feature>
<keyword id="KW-1185">Reference proteome</keyword>
<keyword id="KW-0687">Ribonucleoprotein</keyword>
<keyword id="KW-0689">Ribosomal protein</keyword>
<keyword id="KW-0694">RNA-binding</keyword>
<keyword id="KW-0699">rRNA-binding</keyword>
<evidence type="ECO:0000255" key="1">
    <source>
        <dbReference type="HAMAP-Rule" id="MF_01302"/>
    </source>
</evidence>
<evidence type="ECO:0000305" key="2"/>
<name>RS8_DELAS</name>
<accession>A9BRW5</accession>
<sequence length="131" mass="14174">MSMSDPIADLLTRIRNAQMVSKTTVTAPSSKVKVAIAQVLKDEGYIDGFQVKTDAGKSELEITLKYYAGRPVIERIERVSRPGLRVYKGRDAIPQVMNGMGVAIVTTPKGVMTDRKARATGVGGEVLCYVA</sequence>
<reference key="1">
    <citation type="submission" date="2007-11" db="EMBL/GenBank/DDBJ databases">
        <title>Complete sequence of Delftia acidovorans DSM 14801 / SPH-1.</title>
        <authorList>
            <person name="Copeland A."/>
            <person name="Lucas S."/>
            <person name="Lapidus A."/>
            <person name="Barry K."/>
            <person name="Glavina del Rio T."/>
            <person name="Dalin E."/>
            <person name="Tice H."/>
            <person name="Pitluck S."/>
            <person name="Lowry S."/>
            <person name="Clum A."/>
            <person name="Schmutz J."/>
            <person name="Larimer F."/>
            <person name="Land M."/>
            <person name="Hauser L."/>
            <person name="Kyrpides N."/>
            <person name="Kim E."/>
            <person name="Schleheck D."/>
            <person name="Richardson P."/>
        </authorList>
    </citation>
    <scope>NUCLEOTIDE SEQUENCE [LARGE SCALE GENOMIC DNA]</scope>
    <source>
        <strain>DSM 14801 / SPH-1</strain>
    </source>
</reference>
<comment type="function">
    <text evidence="1">One of the primary rRNA binding proteins, it binds directly to 16S rRNA central domain where it helps coordinate assembly of the platform of the 30S subunit.</text>
</comment>
<comment type="subunit">
    <text evidence="1">Part of the 30S ribosomal subunit. Contacts proteins S5 and S12.</text>
</comment>
<comment type="similarity">
    <text evidence="1">Belongs to the universal ribosomal protein uS8 family.</text>
</comment>
<dbReference type="EMBL" id="CP000884">
    <property type="protein sequence ID" value="ABX33682.1"/>
    <property type="molecule type" value="Genomic_DNA"/>
</dbReference>
<dbReference type="RefSeq" id="WP_012202968.1">
    <property type="nucleotide sequence ID" value="NC_010002.1"/>
</dbReference>
<dbReference type="SMR" id="A9BRW5"/>
<dbReference type="STRING" id="398578.Daci_1036"/>
<dbReference type="GeneID" id="24114718"/>
<dbReference type="KEGG" id="dac:Daci_1036"/>
<dbReference type="eggNOG" id="COG0096">
    <property type="taxonomic scope" value="Bacteria"/>
</dbReference>
<dbReference type="HOGENOM" id="CLU_098428_0_0_4"/>
<dbReference type="Proteomes" id="UP000000784">
    <property type="component" value="Chromosome"/>
</dbReference>
<dbReference type="GO" id="GO:1990904">
    <property type="term" value="C:ribonucleoprotein complex"/>
    <property type="evidence" value="ECO:0007669"/>
    <property type="project" value="UniProtKB-KW"/>
</dbReference>
<dbReference type="GO" id="GO:0005840">
    <property type="term" value="C:ribosome"/>
    <property type="evidence" value="ECO:0007669"/>
    <property type="project" value="UniProtKB-KW"/>
</dbReference>
<dbReference type="GO" id="GO:0019843">
    <property type="term" value="F:rRNA binding"/>
    <property type="evidence" value="ECO:0007669"/>
    <property type="project" value="UniProtKB-UniRule"/>
</dbReference>
<dbReference type="GO" id="GO:0003735">
    <property type="term" value="F:structural constituent of ribosome"/>
    <property type="evidence" value="ECO:0007669"/>
    <property type="project" value="InterPro"/>
</dbReference>
<dbReference type="GO" id="GO:0006412">
    <property type="term" value="P:translation"/>
    <property type="evidence" value="ECO:0007669"/>
    <property type="project" value="UniProtKB-UniRule"/>
</dbReference>
<dbReference type="FunFam" id="3.30.1370.30:FF:000002">
    <property type="entry name" value="30S ribosomal protein S8"/>
    <property type="match status" value="1"/>
</dbReference>
<dbReference type="FunFam" id="3.30.1490.10:FF:000001">
    <property type="entry name" value="30S ribosomal protein S8"/>
    <property type="match status" value="1"/>
</dbReference>
<dbReference type="Gene3D" id="3.30.1370.30">
    <property type="match status" value="1"/>
</dbReference>
<dbReference type="Gene3D" id="3.30.1490.10">
    <property type="match status" value="1"/>
</dbReference>
<dbReference type="HAMAP" id="MF_01302_B">
    <property type="entry name" value="Ribosomal_uS8_B"/>
    <property type="match status" value="1"/>
</dbReference>
<dbReference type="InterPro" id="IPR000630">
    <property type="entry name" value="Ribosomal_uS8"/>
</dbReference>
<dbReference type="InterPro" id="IPR047863">
    <property type="entry name" value="Ribosomal_uS8_CS"/>
</dbReference>
<dbReference type="InterPro" id="IPR035987">
    <property type="entry name" value="Ribosomal_uS8_sf"/>
</dbReference>
<dbReference type="NCBIfam" id="NF001109">
    <property type="entry name" value="PRK00136.1"/>
    <property type="match status" value="1"/>
</dbReference>
<dbReference type="PANTHER" id="PTHR11758">
    <property type="entry name" value="40S RIBOSOMAL PROTEIN S15A"/>
    <property type="match status" value="1"/>
</dbReference>
<dbReference type="Pfam" id="PF00410">
    <property type="entry name" value="Ribosomal_S8"/>
    <property type="match status" value="1"/>
</dbReference>
<dbReference type="SUPFAM" id="SSF56047">
    <property type="entry name" value="Ribosomal protein S8"/>
    <property type="match status" value="1"/>
</dbReference>
<dbReference type="PROSITE" id="PS00053">
    <property type="entry name" value="RIBOSOMAL_S8"/>
    <property type="match status" value="1"/>
</dbReference>
<gene>
    <name evidence="1" type="primary">rpsH</name>
    <name type="ordered locus">Daci_1036</name>
</gene>
<protein>
    <recommendedName>
        <fullName evidence="1">Small ribosomal subunit protein uS8</fullName>
    </recommendedName>
    <alternativeName>
        <fullName evidence="2">30S ribosomal protein S8</fullName>
    </alternativeName>
</protein>